<sequence>MPNLQQTASQSQHHLHPHHLRPQQQQQQQQHHHQQQRQQQQHTHHQQQHHSDFPLPDGWDIAKDFDGKTYYIDHINKKTTWLDPRDCYTKPQTFEDCVGDELPMGWEESYDPNIGPYYINHLAQSTQLEDPRQEWKSVQEQMLSDYLSAAQDQLENKREMFDVKQQRLLWAQEEYNHLKLAASRSSLCSSSSSMSRHDPELLRADLMLARERVHQLKQELTHITNDISYTERGMNTLYSVGEKINARENGCYDIAEVQAIHEEMLKVHKSLVSGEKVREELMRSLVQIKNELGRQQISEENSDLASPFDRVCVASQTDLCGSSGDNLNEGARFAEMAKTTLQYAEWRKHIKKLQQQLADHVERIEPGQLESDKDRILLIQEKEKLLNDLNSISLKSRSEEEKRVIHQTRHKLEEDLKEAYEANNTCVANRLRFHEEKQLLLDKLQEALKSTKLLEERLKTFSSESTFSISSGSSLGSLVHGQHKSALSFTDIYIDPFAVDSPIDVVDLRRRSQRLFQQHQQQRLHPVHPVLQQQQSAEVTLSPRSSLSMETPPASPMKYNAGADQTPQALKEEPTYANALHAPPAYTAPPPVPISGVRARPYDLDSTVLDCMMLEAKLQKLNMGTPLNLAVAPLSPISEKPSLLDLPQEMLSRSSSTSNTRSVSAAVSNESVAGDSGVFEASRAHLPRKELAQVQIGLKYLKQEGVLVVSLERANNLLALWTASADNSQVYLRAALLPNSLTSIRTKALGDFQKPVFNDTFAVPITLDKLLTKSLQVTVVTMTGQKEEIIGTVQISMAEFNPEDSTLKWYNVLSSKFIPSFESLDIPSTSAAAAAAAVAASNAPNPGNNREESSDESTITSSQTSTLTRNQAPCMELQEQIAAELMGLGPLNEPECSDDDDDDEEEELEDKQLVSDVGLMNSSSMLHAYLQNMKQEFADKETNTDRAYLPEKSRGQSQLMDDRPVKRSQTFTPSAAVSKNRYNCRLNRSDSDSAMHCGVAPHTFQRGAAERRSLRYLSKAPKSVTKLHHTHIPRTSLDLELDLQAQHSKLYFLNDQIAKLQNLKEVLQKACDNKDPLVAAWAIENEEFQRLVARADPAKCPEERQLQKLLMKTAKEIHKLRKTKVPKGCPDLVSFKEKITFFTRKGLSVPELPSEFTLPEANPIEEEEEEEDEDEFYNSPETAIAINTALVASSNRNKNLSEHLHRATSGAVPKIPAPVVTPAVTPAAAPAATPAATPAATPAATSAATPAATPVVSPAAQPDAKAADAPIPVASNDAEQQRFDYVVDRNYGVEV</sequence>
<name>KIBRA_DROSE</name>
<feature type="chain" id="PRO_0000392973" description="Protein kibra">
    <location>
        <begin position="1"/>
        <end position="1295"/>
    </location>
</feature>
<feature type="domain" description="WW 1" evidence="4">
    <location>
        <begin position="53"/>
        <end position="86"/>
    </location>
</feature>
<feature type="domain" description="WW 2" evidence="4">
    <location>
        <begin position="100"/>
        <end position="133"/>
    </location>
</feature>
<feature type="domain" description="C2" evidence="3">
    <location>
        <begin position="690"/>
        <end position="810"/>
    </location>
</feature>
<feature type="region of interest" description="Disordered" evidence="5">
    <location>
        <begin position="1"/>
        <end position="59"/>
    </location>
</feature>
<feature type="region of interest" description="Disordered" evidence="5">
    <location>
        <begin position="540"/>
        <end position="559"/>
    </location>
</feature>
<feature type="region of interest" description="Disordered" evidence="5">
    <location>
        <begin position="840"/>
        <end position="871"/>
    </location>
</feature>
<feature type="region of interest" description="Disordered" evidence="5">
    <location>
        <begin position="889"/>
        <end position="911"/>
    </location>
</feature>
<feature type="region of interest" description="Disordered" evidence="5">
    <location>
        <begin position="941"/>
        <end position="971"/>
    </location>
</feature>
<feature type="region of interest" description="Disordered" evidence="5">
    <location>
        <begin position="1153"/>
        <end position="1176"/>
    </location>
</feature>
<feature type="region of interest" description="Disordered" evidence="5">
    <location>
        <begin position="1247"/>
        <end position="1278"/>
    </location>
</feature>
<feature type="coiled-coil region" evidence="2">
    <location>
        <begin position="200"/>
        <end position="228"/>
    </location>
</feature>
<feature type="coiled-coil region" evidence="2">
    <location>
        <begin position="334"/>
        <end position="460"/>
    </location>
</feature>
<feature type="coiled-coil region" evidence="2">
    <location>
        <begin position="1048"/>
        <end position="1075"/>
    </location>
</feature>
<feature type="compositionally biased region" description="Polar residues" evidence="5">
    <location>
        <begin position="540"/>
        <end position="549"/>
    </location>
</feature>
<feature type="compositionally biased region" description="Low complexity" evidence="5">
    <location>
        <begin position="856"/>
        <end position="868"/>
    </location>
</feature>
<feature type="compositionally biased region" description="Acidic residues" evidence="5">
    <location>
        <begin position="895"/>
        <end position="909"/>
    </location>
</feature>
<feature type="compositionally biased region" description="Basic and acidic residues" evidence="5">
    <location>
        <begin position="941"/>
        <end position="965"/>
    </location>
</feature>
<feature type="compositionally biased region" description="Acidic residues" evidence="5">
    <location>
        <begin position="1163"/>
        <end position="1176"/>
    </location>
</feature>
<feature type="compositionally biased region" description="Low complexity" evidence="5">
    <location>
        <begin position="1247"/>
        <end position="1274"/>
    </location>
</feature>
<organism>
    <name type="scientific">Drosophila sechellia</name>
    <name type="common">Fruit fly</name>
    <dbReference type="NCBI Taxonomy" id="7238"/>
    <lineage>
        <taxon>Eukaryota</taxon>
        <taxon>Metazoa</taxon>
        <taxon>Ecdysozoa</taxon>
        <taxon>Arthropoda</taxon>
        <taxon>Hexapoda</taxon>
        <taxon>Insecta</taxon>
        <taxon>Pterygota</taxon>
        <taxon>Neoptera</taxon>
        <taxon>Endopterygota</taxon>
        <taxon>Diptera</taxon>
        <taxon>Brachycera</taxon>
        <taxon>Muscomorpha</taxon>
        <taxon>Ephydroidea</taxon>
        <taxon>Drosophilidae</taxon>
        <taxon>Drosophila</taxon>
        <taxon>Sophophora</taxon>
    </lineage>
</organism>
<reference key="1">
    <citation type="journal article" date="2007" name="Nature">
        <title>Evolution of genes and genomes on the Drosophila phylogeny.</title>
        <authorList>
            <consortium name="Drosophila 12 genomes consortium"/>
        </authorList>
    </citation>
    <scope>NUCLEOTIDE SEQUENCE [LARGE SCALE GENOMIC DNA]</scope>
    <source>
        <strain>Rob3c / Tucson 14021-0248.25</strain>
    </source>
</reference>
<dbReference type="EMBL" id="CH480815">
    <property type="protein sequence ID" value="EDW42153.1"/>
    <property type="molecule type" value="Genomic_DNA"/>
</dbReference>
<dbReference type="RefSeq" id="XP_002031167.1">
    <property type="nucleotide sequence ID" value="XM_002031131.1"/>
</dbReference>
<dbReference type="SMR" id="B4HEJ6"/>
<dbReference type="STRING" id="7238.B4HEJ6"/>
<dbReference type="EnsemblMetazoa" id="FBtr0208816">
    <property type="protein sequence ID" value="FBpp0207308"/>
    <property type="gene ID" value="FBgn0180687"/>
</dbReference>
<dbReference type="HOGENOM" id="CLU_005420_1_0_1"/>
<dbReference type="OMA" id="QVTVVSM"/>
<dbReference type="PhylomeDB" id="B4HEJ6"/>
<dbReference type="ChiTaRS" id="kibra">
    <property type="organism name" value="fly"/>
</dbReference>
<dbReference type="Proteomes" id="UP000001292">
    <property type="component" value="Unassembled WGS sequence"/>
</dbReference>
<dbReference type="GO" id="GO:0106037">
    <property type="term" value="C:apicomedial cortex"/>
    <property type="evidence" value="ECO:0007669"/>
    <property type="project" value="EnsemblMetazoa"/>
</dbReference>
<dbReference type="GO" id="GO:0005911">
    <property type="term" value="C:cell-cell junction"/>
    <property type="evidence" value="ECO:0007669"/>
    <property type="project" value="EnsemblMetazoa"/>
</dbReference>
<dbReference type="GO" id="GO:0098592">
    <property type="term" value="C:cytoplasmic side of apical plasma membrane"/>
    <property type="evidence" value="ECO:0007669"/>
    <property type="project" value="EnsemblMetazoa"/>
</dbReference>
<dbReference type="GO" id="GO:0036375">
    <property type="term" value="C:Kibra-Ex-Mer complex"/>
    <property type="evidence" value="ECO:0007669"/>
    <property type="project" value="EnsemblMetazoa"/>
</dbReference>
<dbReference type="GO" id="GO:0019900">
    <property type="term" value="F:kinase binding"/>
    <property type="evidence" value="ECO:0007669"/>
    <property type="project" value="TreeGrafter"/>
</dbReference>
<dbReference type="GO" id="GO:0060090">
    <property type="term" value="F:molecular adaptor activity"/>
    <property type="evidence" value="ECO:0007669"/>
    <property type="project" value="TreeGrafter"/>
</dbReference>
<dbReference type="GO" id="GO:0007298">
    <property type="term" value="P:border follicle cell migration"/>
    <property type="evidence" value="ECO:0007669"/>
    <property type="project" value="EnsemblMetazoa"/>
</dbReference>
<dbReference type="GO" id="GO:0060253">
    <property type="term" value="P:negative regulation of glial cell proliferation"/>
    <property type="evidence" value="ECO:0007669"/>
    <property type="project" value="EnsemblMetazoa"/>
</dbReference>
<dbReference type="GO" id="GO:0046621">
    <property type="term" value="P:negative regulation of organ growth"/>
    <property type="evidence" value="ECO:0007669"/>
    <property type="project" value="EnsemblMetazoa"/>
</dbReference>
<dbReference type="GO" id="GO:0043065">
    <property type="term" value="P:positive regulation of apoptotic process"/>
    <property type="evidence" value="ECO:0007669"/>
    <property type="project" value="EnsemblMetazoa"/>
</dbReference>
<dbReference type="GO" id="GO:0035332">
    <property type="term" value="P:positive regulation of hippo signaling"/>
    <property type="evidence" value="ECO:0000250"/>
    <property type="project" value="UniProtKB"/>
</dbReference>
<dbReference type="GO" id="GO:0045463">
    <property type="term" value="P:R8 cell development"/>
    <property type="evidence" value="ECO:0007669"/>
    <property type="project" value="EnsemblMetazoa"/>
</dbReference>
<dbReference type="GO" id="GO:0045464">
    <property type="term" value="P:R8 cell fate specification"/>
    <property type="evidence" value="ECO:0007669"/>
    <property type="project" value="EnsemblMetazoa"/>
</dbReference>
<dbReference type="GO" id="GO:0006355">
    <property type="term" value="P:regulation of DNA-templated transcription"/>
    <property type="evidence" value="ECO:0007669"/>
    <property type="project" value="EnsemblMetazoa"/>
</dbReference>
<dbReference type="CDD" id="cd08680">
    <property type="entry name" value="C2_Kibra"/>
    <property type="match status" value="1"/>
</dbReference>
<dbReference type="CDD" id="cd00201">
    <property type="entry name" value="WW"/>
    <property type="match status" value="2"/>
</dbReference>
<dbReference type="FunFam" id="2.60.40.150:FF:000228">
    <property type="entry name" value="Blast:Protein kibra"/>
    <property type="match status" value="1"/>
</dbReference>
<dbReference type="Gene3D" id="2.20.70.10">
    <property type="match status" value="2"/>
</dbReference>
<dbReference type="Gene3D" id="2.60.40.150">
    <property type="entry name" value="C2 domain"/>
    <property type="match status" value="1"/>
</dbReference>
<dbReference type="InterPro" id="IPR000008">
    <property type="entry name" value="C2_dom"/>
</dbReference>
<dbReference type="InterPro" id="IPR035892">
    <property type="entry name" value="C2_domain_sf"/>
</dbReference>
<dbReference type="InterPro" id="IPR037771">
    <property type="entry name" value="C2_WWC"/>
</dbReference>
<dbReference type="InterPro" id="IPR001202">
    <property type="entry name" value="WW_dom"/>
</dbReference>
<dbReference type="InterPro" id="IPR036020">
    <property type="entry name" value="WW_dom_sf"/>
</dbReference>
<dbReference type="InterPro" id="IPR051105">
    <property type="entry name" value="WWC/KIBRA_Hippo_Reg"/>
</dbReference>
<dbReference type="PANTHER" id="PTHR14791">
    <property type="entry name" value="BOMB/KIRA PROTEINS"/>
    <property type="match status" value="1"/>
</dbReference>
<dbReference type="PANTHER" id="PTHR14791:SF29">
    <property type="entry name" value="PROTEIN KIBRA"/>
    <property type="match status" value="1"/>
</dbReference>
<dbReference type="Pfam" id="PF00168">
    <property type="entry name" value="C2"/>
    <property type="match status" value="1"/>
</dbReference>
<dbReference type="Pfam" id="PF00397">
    <property type="entry name" value="WW"/>
    <property type="match status" value="2"/>
</dbReference>
<dbReference type="SMART" id="SM00239">
    <property type="entry name" value="C2"/>
    <property type="match status" value="1"/>
</dbReference>
<dbReference type="SMART" id="SM00456">
    <property type="entry name" value="WW"/>
    <property type="match status" value="2"/>
</dbReference>
<dbReference type="SUPFAM" id="SSF49562">
    <property type="entry name" value="C2 domain (Calcium/lipid-binding domain, CaLB)"/>
    <property type="match status" value="1"/>
</dbReference>
<dbReference type="SUPFAM" id="SSF51045">
    <property type="entry name" value="WW domain"/>
    <property type="match status" value="2"/>
</dbReference>
<dbReference type="PROSITE" id="PS50004">
    <property type="entry name" value="C2"/>
    <property type="match status" value="1"/>
</dbReference>
<dbReference type="PROSITE" id="PS01159">
    <property type="entry name" value="WW_DOMAIN_1"/>
    <property type="match status" value="1"/>
</dbReference>
<dbReference type="PROSITE" id="PS50020">
    <property type="entry name" value="WW_DOMAIN_2"/>
    <property type="match status" value="2"/>
</dbReference>
<protein>
    <recommendedName>
        <fullName>Protein kibra</fullName>
    </recommendedName>
</protein>
<comment type="function">
    <text evidence="1">Regulator of the Hippo/SWH (Sav/Wts/Hpo) signaling pathway, a signaling pathway that plays a pivotal role in organ size control and tumor suppression by restricting proliferation and promoting apoptosis. The core of this pathway is composed of a kinase cascade wherein Hippo (Hpo), in complex with its regulatory protein Salvador (Sav), phosphorylates and activates Warts (Wts) in complex with its regulatory protein Mats, which in turn phosphorylates and inactivates the Yorkie (Yki) oncoprotein. Kibra acts synergistically along with Ex and Mer to regulate the Hippo signaling pathway (By similarity).</text>
</comment>
<comment type="subunit">
    <text evidence="1">Forms a complex with Mer and Ex. Interacts (via domain WW 1) with Ex (via RXPPXY motif). Interacts with Mer, Sav, Hpo and Wts (By similarity).</text>
</comment>
<comment type="subcellular location">
    <subcellularLocation>
        <location evidence="1">Cytoplasm</location>
    </subcellularLocation>
    <subcellularLocation>
        <location evidence="1">Apical cell membrane</location>
    </subcellularLocation>
    <text evidence="1">Localizes at the apical cortex of epithelial cells and cytoplasmic, punctate.</text>
</comment>
<comment type="similarity">
    <text evidence="6">Belongs to the WWC family. KIBRA subfamily.</text>
</comment>
<evidence type="ECO:0000250" key="1"/>
<evidence type="ECO:0000255" key="2"/>
<evidence type="ECO:0000255" key="3">
    <source>
        <dbReference type="PROSITE-ProRule" id="PRU00041"/>
    </source>
</evidence>
<evidence type="ECO:0000255" key="4">
    <source>
        <dbReference type="PROSITE-ProRule" id="PRU00224"/>
    </source>
</evidence>
<evidence type="ECO:0000256" key="5">
    <source>
        <dbReference type="SAM" id="MobiDB-lite"/>
    </source>
</evidence>
<evidence type="ECO:0000305" key="6"/>
<accession>B4HEJ6</accession>
<gene>
    <name type="primary">Kibra</name>
    <name type="ORF">GM25831</name>
</gene>
<keyword id="KW-1003">Cell membrane</keyword>
<keyword id="KW-0175">Coiled coil</keyword>
<keyword id="KW-0963">Cytoplasm</keyword>
<keyword id="KW-0472">Membrane</keyword>
<keyword id="KW-0597">Phosphoprotein</keyword>
<keyword id="KW-1185">Reference proteome</keyword>
<keyword id="KW-0677">Repeat</keyword>
<keyword id="KW-0804">Transcription</keyword>
<keyword id="KW-0805">Transcription regulation</keyword>
<proteinExistence type="inferred from homology"/>